<proteinExistence type="inferred from homology"/>
<evidence type="ECO:0000255" key="1">
    <source>
        <dbReference type="HAMAP-Rule" id="MF_01706"/>
    </source>
</evidence>
<feature type="chain" id="PRO_0000272045" description="Fe(3+) ions import ATP-binding protein FbpC 1">
    <location>
        <begin position="1"/>
        <end position="346"/>
    </location>
</feature>
<feature type="domain" description="ABC transporter" evidence="1">
    <location>
        <begin position="5"/>
        <end position="235"/>
    </location>
</feature>
<feature type="binding site" evidence="1">
    <location>
        <begin position="37"/>
        <end position="44"/>
    </location>
    <ligand>
        <name>ATP</name>
        <dbReference type="ChEBI" id="CHEBI:30616"/>
    </ligand>
</feature>
<protein>
    <recommendedName>
        <fullName evidence="1">Fe(3+) ions import ATP-binding protein FbpC 1</fullName>
        <ecNumber evidence="1">7.2.2.7</ecNumber>
    </recommendedName>
</protein>
<organism>
    <name type="scientific">Rhodococcus jostii (strain RHA1)</name>
    <dbReference type="NCBI Taxonomy" id="101510"/>
    <lineage>
        <taxon>Bacteria</taxon>
        <taxon>Bacillati</taxon>
        <taxon>Actinomycetota</taxon>
        <taxon>Actinomycetes</taxon>
        <taxon>Mycobacteriales</taxon>
        <taxon>Nocardiaceae</taxon>
        <taxon>Rhodococcus</taxon>
    </lineage>
</organism>
<reference key="1">
    <citation type="journal article" date="2006" name="Proc. Natl. Acad. Sci. U.S.A.">
        <title>The complete genome of Rhodococcus sp. RHA1 provides insights into a catabolic powerhouse.</title>
        <authorList>
            <person name="McLeod M.P."/>
            <person name="Warren R.L."/>
            <person name="Hsiao W.W.L."/>
            <person name="Araki N."/>
            <person name="Myhre M."/>
            <person name="Fernandes C."/>
            <person name="Miyazawa D."/>
            <person name="Wong W."/>
            <person name="Lillquist A.L."/>
            <person name="Wang D."/>
            <person name="Dosanjh M."/>
            <person name="Hara H."/>
            <person name="Petrescu A."/>
            <person name="Morin R.D."/>
            <person name="Yang G."/>
            <person name="Stott J.M."/>
            <person name="Schein J.E."/>
            <person name="Shin H."/>
            <person name="Smailus D."/>
            <person name="Siddiqui A.S."/>
            <person name="Marra M.A."/>
            <person name="Jones S.J.M."/>
            <person name="Holt R."/>
            <person name="Brinkman F.S.L."/>
            <person name="Miyauchi K."/>
            <person name="Fukuda M."/>
            <person name="Davies J.E."/>
            <person name="Mohn W.W."/>
            <person name="Eltis L.D."/>
        </authorList>
    </citation>
    <scope>NUCLEOTIDE SEQUENCE [LARGE SCALE GENOMIC DNA]</scope>
    <source>
        <strain>RHA1</strain>
    </source>
</reference>
<comment type="function">
    <text evidence="1">Part of the ABC transporter complex FbpABC involved in Fe(3+) ions import. Responsible for energy coupling to the transport system.</text>
</comment>
<comment type="catalytic activity">
    <reaction evidence="1">
        <text>Fe(3+)(out) + ATP + H2O = Fe(3+)(in) + ADP + phosphate + H(+)</text>
        <dbReference type="Rhea" id="RHEA:12332"/>
        <dbReference type="ChEBI" id="CHEBI:15377"/>
        <dbReference type="ChEBI" id="CHEBI:15378"/>
        <dbReference type="ChEBI" id="CHEBI:29034"/>
        <dbReference type="ChEBI" id="CHEBI:30616"/>
        <dbReference type="ChEBI" id="CHEBI:43474"/>
        <dbReference type="ChEBI" id="CHEBI:456216"/>
        <dbReference type="EC" id="7.2.2.7"/>
    </reaction>
</comment>
<comment type="subunit">
    <text evidence="1">The complex is composed of two ATP-binding proteins (FbpC), two transmembrane proteins (FbpB) and a solute-binding protein (FbpA).</text>
</comment>
<comment type="subcellular location">
    <subcellularLocation>
        <location evidence="1">Cell membrane</location>
        <topology evidence="1">Peripheral membrane protein</topology>
    </subcellularLocation>
</comment>
<comment type="similarity">
    <text evidence="1">Belongs to the ABC transporter superfamily. Fe(3+) ion importer (TC 3.A.1.10) family.</text>
</comment>
<accession>Q0SBZ1</accession>
<sequence length="346" mass="36033">MTYALEVDGVDKSFGGATILRGVAFAVESGSTTAIVGPSGCGKTTLLRLIAGFEKPDAGTIALAGRVVAGGGWAPAHRRSVGYVAQDGALFPHATVGANVGFGLPRRARTPARIAELLEMVSLDPSYAARRPDQLSGGQQQRVALARALAREPELMLLDEPFSALDAGLRANTRRIVADVLAKAAITTILVTHDQPEALSFADRVAVMRAGRLAQIGTPREIYSTPIDVPTAEFIGDAVVLSAHVDGSRARCALGDVAVAANGVHGNARVMVRPEQIELTPDGAGVSGTVVDVEYLGSEMLLGIRLNTADGMVPERVTVRRFGATTLTPGDRVGIRVLGKAVAYPA</sequence>
<dbReference type="EC" id="7.2.2.7" evidence="1"/>
<dbReference type="EMBL" id="CP000431">
    <property type="protein sequence ID" value="ABG94945.1"/>
    <property type="molecule type" value="Genomic_DNA"/>
</dbReference>
<dbReference type="RefSeq" id="WP_011595805.1">
    <property type="nucleotide sequence ID" value="NC_008268.1"/>
</dbReference>
<dbReference type="SMR" id="Q0SBZ1"/>
<dbReference type="KEGG" id="rha:RHA1_ro03142"/>
<dbReference type="PATRIC" id="fig|101510.16.peg.3177"/>
<dbReference type="eggNOG" id="COG3842">
    <property type="taxonomic scope" value="Bacteria"/>
</dbReference>
<dbReference type="HOGENOM" id="CLU_000604_1_1_11"/>
<dbReference type="OrthoDB" id="9802264at2"/>
<dbReference type="Proteomes" id="UP000008710">
    <property type="component" value="Chromosome"/>
</dbReference>
<dbReference type="GO" id="GO:0043190">
    <property type="term" value="C:ATP-binding cassette (ABC) transporter complex"/>
    <property type="evidence" value="ECO:0007669"/>
    <property type="project" value="InterPro"/>
</dbReference>
<dbReference type="GO" id="GO:0015408">
    <property type="term" value="F:ABC-type ferric iron transporter activity"/>
    <property type="evidence" value="ECO:0007669"/>
    <property type="project" value="UniProtKB-EC"/>
</dbReference>
<dbReference type="GO" id="GO:0005524">
    <property type="term" value="F:ATP binding"/>
    <property type="evidence" value="ECO:0007669"/>
    <property type="project" value="UniProtKB-KW"/>
</dbReference>
<dbReference type="GO" id="GO:0016887">
    <property type="term" value="F:ATP hydrolysis activity"/>
    <property type="evidence" value="ECO:0007669"/>
    <property type="project" value="InterPro"/>
</dbReference>
<dbReference type="CDD" id="cd03259">
    <property type="entry name" value="ABC_Carb_Solutes_like"/>
    <property type="match status" value="1"/>
</dbReference>
<dbReference type="FunFam" id="3.40.50.300:FF:000425">
    <property type="entry name" value="Probable ABC transporter, ATP-binding subunit"/>
    <property type="match status" value="1"/>
</dbReference>
<dbReference type="Gene3D" id="3.40.50.300">
    <property type="entry name" value="P-loop containing nucleotide triphosphate hydrolases"/>
    <property type="match status" value="1"/>
</dbReference>
<dbReference type="InterPro" id="IPR003593">
    <property type="entry name" value="AAA+_ATPase"/>
</dbReference>
<dbReference type="InterPro" id="IPR050093">
    <property type="entry name" value="ABC_SmlMolc_Importer"/>
</dbReference>
<dbReference type="InterPro" id="IPR003439">
    <property type="entry name" value="ABC_transporter-like_ATP-bd"/>
</dbReference>
<dbReference type="InterPro" id="IPR017871">
    <property type="entry name" value="ABC_transporter-like_CS"/>
</dbReference>
<dbReference type="InterPro" id="IPR015853">
    <property type="entry name" value="ABC_transpr_FbpC"/>
</dbReference>
<dbReference type="InterPro" id="IPR008995">
    <property type="entry name" value="Mo/tungstate-bd_C_term_dom"/>
</dbReference>
<dbReference type="InterPro" id="IPR027417">
    <property type="entry name" value="P-loop_NTPase"/>
</dbReference>
<dbReference type="InterPro" id="IPR013611">
    <property type="entry name" value="Transp-assoc_OB_typ2"/>
</dbReference>
<dbReference type="PANTHER" id="PTHR42781">
    <property type="entry name" value="SPERMIDINE/PUTRESCINE IMPORT ATP-BINDING PROTEIN POTA"/>
    <property type="match status" value="1"/>
</dbReference>
<dbReference type="PANTHER" id="PTHR42781:SF4">
    <property type="entry name" value="SPERMIDINE_PUTRESCINE IMPORT ATP-BINDING PROTEIN POTA"/>
    <property type="match status" value="1"/>
</dbReference>
<dbReference type="Pfam" id="PF00005">
    <property type="entry name" value="ABC_tran"/>
    <property type="match status" value="1"/>
</dbReference>
<dbReference type="Pfam" id="PF08402">
    <property type="entry name" value="TOBE_2"/>
    <property type="match status" value="1"/>
</dbReference>
<dbReference type="SMART" id="SM00382">
    <property type="entry name" value="AAA"/>
    <property type="match status" value="1"/>
</dbReference>
<dbReference type="SUPFAM" id="SSF50331">
    <property type="entry name" value="MOP-like"/>
    <property type="match status" value="1"/>
</dbReference>
<dbReference type="SUPFAM" id="SSF52540">
    <property type="entry name" value="P-loop containing nucleoside triphosphate hydrolases"/>
    <property type="match status" value="1"/>
</dbReference>
<dbReference type="PROSITE" id="PS00211">
    <property type="entry name" value="ABC_TRANSPORTER_1"/>
    <property type="match status" value="1"/>
</dbReference>
<dbReference type="PROSITE" id="PS50893">
    <property type="entry name" value="ABC_TRANSPORTER_2"/>
    <property type="match status" value="1"/>
</dbReference>
<dbReference type="PROSITE" id="PS51242">
    <property type="entry name" value="FBPC"/>
    <property type="match status" value="1"/>
</dbReference>
<keyword id="KW-0067">ATP-binding</keyword>
<keyword id="KW-1003">Cell membrane</keyword>
<keyword id="KW-0406">Ion transport</keyword>
<keyword id="KW-0408">Iron</keyword>
<keyword id="KW-0410">Iron transport</keyword>
<keyword id="KW-0472">Membrane</keyword>
<keyword id="KW-0547">Nucleotide-binding</keyword>
<keyword id="KW-1278">Translocase</keyword>
<keyword id="KW-0813">Transport</keyword>
<gene>
    <name evidence="1" type="primary">fbpC1</name>
    <name type="ordered locus">RHA1_ro03142</name>
</gene>
<name>FBPC1_RHOJR</name>